<organism>
    <name type="scientific">Mus musculus</name>
    <name type="common">Mouse</name>
    <dbReference type="NCBI Taxonomy" id="10090"/>
    <lineage>
        <taxon>Eukaryota</taxon>
        <taxon>Metazoa</taxon>
        <taxon>Chordata</taxon>
        <taxon>Craniata</taxon>
        <taxon>Vertebrata</taxon>
        <taxon>Euteleostomi</taxon>
        <taxon>Mammalia</taxon>
        <taxon>Eutheria</taxon>
        <taxon>Euarchontoglires</taxon>
        <taxon>Glires</taxon>
        <taxon>Rodentia</taxon>
        <taxon>Myomorpha</taxon>
        <taxon>Muroidea</taxon>
        <taxon>Muridae</taxon>
        <taxon>Murinae</taxon>
        <taxon>Mus</taxon>
        <taxon>Mus</taxon>
    </lineage>
</organism>
<sequence>MAHSPVAVQVPGMQNNIADPEELFTKLERIGKGSFGEVFKGIDNRTQQVVAIKIIDLEEAEDEIEDIQQEITVLSQCDSSYVTKYYGSYLKGSKLWIIMEYLGGGSALDLLRAGPFDEFQIATMLKEILKGLDYLHSEKKIHRDIKAANVLLSEQGDVKLADFGVAGQLTDTQIKRNTFVGTPFWMAPEVIQQSAYDSKADIWSLGITAIELAKGEPPNSDMHPMRVLFLIPKNNPPTLIGDFTKSFKEFIDACLNKDPSFRPTAKELLKHKFIVKNSKKTSYLTELIDRFKRWKAEGHSDEESDSEGSDSESSSRESNPHPEWSFTTVRKKPDPKKLQNGEEQDLVQTLSCLSMIITPAFAELKQQDENNASRNQAIEELEKSIAVAETACPGITDKMVKKLIEKFQKCSADESP</sequence>
<name>STK26_MOUSE</name>
<dbReference type="EC" id="2.7.11.1" evidence="2"/>
<dbReference type="EMBL" id="AK034609">
    <property type="protein sequence ID" value="BAC28768.1"/>
    <property type="molecule type" value="mRNA"/>
</dbReference>
<dbReference type="EMBL" id="BC005708">
    <property type="protein sequence ID" value="AAH05708.1"/>
    <property type="molecule type" value="mRNA"/>
</dbReference>
<dbReference type="CCDS" id="CCDS40968.1"/>
<dbReference type="RefSeq" id="NP_001300673.1">
    <property type="nucleotide sequence ID" value="NM_001313744.1"/>
</dbReference>
<dbReference type="RefSeq" id="NP_598490.1">
    <property type="nucleotide sequence ID" value="NM_133729.3"/>
</dbReference>
<dbReference type="SMR" id="Q99JT2"/>
<dbReference type="BioGRID" id="214035">
    <property type="interactions" value="7"/>
</dbReference>
<dbReference type="FunCoup" id="Q99JT2">
    <property type="interactions" value="1166"/>
</dbReference>
<dbReference type="IntAct" id="Q99JT2">
    <property type="interactions" value="17"/>
</dbReference>
<dbReference type="STRING" id="10090.ENSMUSP00000033444"/>
<dbReference type="iPTMnet" id="Q99JT2"/>
<dbReference type="PhosphoSitePlus" id="Q99JT2"/>
<dbReference type="jPOST" id="Q99JT2"/>
<dbReference type="PaxDb" id="10090-ENSMUSP00000033444"/>
<dbReference type="ProteomicsDB" id="254761"/>
<dbReference type="Antibodypedia" id="30220">
    <property type="antibodies" value="297 antibodies from 37 providers"/>
</dbReference>
<dbReference type="DNASU" id="70415"/>
<dbReference type="Ensembl" id="ENSMUST00000033444.11">
    <property type="protein sequence ID" value="ENSMUSP00000033444.5"/>
    <property type="gene ID" value="ENSMUSG00000031112.11"/>
</dbReference>
<dbReference type="GeneID" id="70415"/>
<dbReference type="KEGG" id="mmu:70415"/>
<dbReference type="UCSC" id="uc009tdr.1">
    <property type="organism name" value="mouse"/>
</dbReference>
<dbReference type="AGR" id="MGI:1917665"/>
<dbReference type="CTD" id="51765"/>
<dbReference type="MGI" id="MGI:1917665">
    <property type="gene designation" value="Stk26"/>
</dbReference>
<dbReference type="VEuPathDB" id="HostDB:ENSMUSG00000031112"/>
<dbReference type="eggNOG" id="KOG0201">
    <property type="taxonomic scope" value="Eukaryota"/>
</dbReference>
<dbReference type="GeneTree" id="ENSGT00940000157904"/>
<dbReference type="InParanoid" id="Q99JT2"/>
<dbReference type="OMA" id="YYGCFLD"/>
<dbReference type="OrthoDB" id="8693905at2759"/>
<dbReference type="PhylomeDB" id="Q99JT2"/>
<dbReference type="TreeFam" id="TF354217"/>
<dbReference type="Reactome" id="R-MMU-111465">
    <property type="pathway name" value="Apoptotic cleavage of cellular proteins"/>
</dbReference>
<dbReference type="BioGRID-ORCS" id="70415">
    <property type="hits" value="2 hits in 79 CRISPR screens"/>
</dbReference>
<dbReference type="ChiTaRS" id="Stk26">
    <property type="organism name" value="mouse"/>
</dbReference>
<dbReference type="PRO" id="PR:Q99JT2"/>
<dbReference type="Proteomes" id="UP000000589">
    <property type="component" value="Chromosome X"/>
</dbReference>
<dbReference type="RNAct" id="Q99JT2">
    <property type="molecule type" value="protein"/>
</dbReference>
<dbReference type="Bgee" id="ENSMUSG00000031112">
    <property type="expression patterns" value="Expressed in humerus cartilage element and 225 other cell types or tissues"/>
</dbReference>
<dbReference type="ExpressionAtlas" id="Q99JT2">
    <property type="expression patterns" value="baseline and differential"/>
</dbReference>
<dbReference type="GO" id="GO:0016324">
    <property type="term" value="C:apical plasma membrane"/>
    <property type="evidence" value="ECO:0007669"/>
    <property type="project" value="Ensembl"/>
</dbReference>
<dbReference type="GO" id="GO:0005737">
    <property type="term" value="C:cytoplasm"/>
    <property type="evidence" value="ECO:0000250"/>
    <property type="project" value="UniProtKB"/>
</dbReference>
<dbReference type="GO" id="GO:0005829">
    <property type="term" value="C:cytosol"/>
    <property type="evidence" value="ECO:0007669"/>
    <property type="project" value="Ensembl"/>
</dbReference>
<dbReference type="GO" id="GO:0090443">
    <property type="term" value="C:FAR/SIN/STRIPAK complex"/>
    <property type="evidence" value="ECO:0000250"/>
    <property type="project" value="UniProtKB"/>
</dbReference>
<dbReference type="GO" id="GO:0005794">
    <property type="term" value="C:Golgi apparatus"/>
    <property type="evidence" value="ECO:0000250"/>
    <property type="project" value="UniProtKB"/>
</dbReference>
<dbReference type="GO" id="GO:0005798">
    <property type="term" value="C:Golgi-associated vesicle"/>
    <property type="evidence" value="ECO:0007669"/>
    <property type="project" value="Ensembl"/>
</dbReference>
<dbReference type="GO" id="GO:0016020">
    <property type="term" value="C:membrane"/>
    <property type="evidence" value="ECO:0000250"/>
    <property type="project" value="UniProtKB"/>
</dbReference>
<dbReference type="GO" id="GO:0048471">
    <property type="term" value="C:perinuclear region of cytoplasm"/>
    <property type="evidence" value="ECO:0007669"/>
    <property type="project" value="Ensembl"/>
</dbReference>
<dbReference type="GO" id="GO:0005524">
    <property type="term" value="F:ATP binding"/>
    <property type="evidence" value="ECO:0000250"/>
    <property type="project" value="UniProtKB"/>
</dbReference>
<dbReference type="GO" id="GO:0000287">
    <property type="term" value="F:magnesium ion binding"/>
    <property type="evidence" value="ECO:0000250"/>
    <property type="project" value="UniProtKB"/>
</dbReference>
<dbReference type="GO" id="GO:0042803">
    <property type="term" value="F:protein homodimerization activity"/>
    <property type="evidence" value="ECO:0007669"/>
    <property type="project" value="Ensembl"/>
</dbReference>
<dbReference type="GO" id="GO:0004672">
    <property type="term" value="F:protein kinase activity"/>
    <property type="evidence" value="ECO:0000250"/>
    <property type="project" value="UniProtKB"/>
</dbReference>
<dbReference type="GO" id="GO:0106310">
    <property type="term" value="F:protein serine kinase activity"/>
    <property type="evidence" value="ECO:0007669"/>
    <property type="project" value="RHEA"/>
</dbReference>
<dbReference type="GO" id="GO:0004674">
    <property type="term" value="F:protein serine/threonine kinase activity"/>
    <property type="evidence" value="ECO:0007669"/>
    <property type="project" value="UniProtKB-KW"/>
</dbReference>
<dbReference type="GO" id="GO:0006915">
    <property type="term" value="P:apoptotic process"/>
    <property type="evidence" value="ECO:0007669"/>
    <property type="project" value="UniProtKB-KW"/>
</dbReference>
<dbReference type="GO" id="GO:0034599">
    <property type="term" value="P:cellular response to oxidative stress"/>
    <property type="evidence" value="ECO:0007669"/>
    <property type="project" value="Ensembl"/>
</dbReference>
<dbReference type="GO" id="GO:0009267">
    <property type="term" value="P:cellular response to starvation"/>
    <property type="evidence" value="ECO:0000250"/>
    <property type="project" value="UniProtKB"/>
</dbReference>
<dbReference type="GO" id="GO:0035556">
    <property type="term" value="P:intracellular signal transduction"/>
    <property type="evidence" value="ECO:0007669"/>
    <property type="project" value="Ensembl"/>
</dbReference>
<dbReference type="GO" id="GO:0030033">
    <property type="term" value="P:microvillus assembly"/>
    <property type="evidence" value="ECO:0007669"/>
    <property type="project" value="Ensembl"/>
</dbReference>
<dbReference type="GO" id="GO:0030336">
    <property type="term" value="P:negative regulation of cell migration"/>
    <property type="evidence" value="ECO:0000250"/>
    <property type="project" value="UniProtKB"/>
</dbReference>
<dbReference type="GO" id="GO:0046777">
    <property type="term" value="P:protein autophosphorylation"/>
    <property type="evidence" value="ECO:0000250"/>
    <property type="project" value="UniProtKB"/>
</dbReference>
<dbReference type="GO" id="GO:0006468">
    <property type="term" value="P:protein phosphorylation"/>
    <property type="evidence" value="ECO:0000250"/>
    <property type="project" value="UniProtKB"/>
</dbReference>
<dbReference type="GO" id="GO:0042981">
    <property type="term" value="P:regulation of apoptotic process"/>
    <property type="evidence" value="ECO:0000250"/>
    <property type="project" value="UniProtKB"/>
</dbReference>
<dbReference type="CDD" id="cd06640">
    <property type="entry name" value="STKc_MST4"/>
    <property type="match status" value="1"/>
</dbReference>
<dbReference type="FunFam" id="1.10.510.10:FF:000411">
    <property type="entry name" value="Probable Ste20-like kinase Don3"/>
    <property type="match status" value="1"/>
</dbReference>
<dbReference type="FunFam" id="1.10.12.70:FF:000004">
    <property type="entry name" value="Serine/threonine-protein kinase 26"/>
    <property type="match status" value="1"/>
</dbReference>
<dbReference type="FunFam" id="3.30.200.20:FF:000252">
    <property type="entry name" value="Serine/threonine-protein kinase 26"/>
    <property type="match status" value="1"/>
</dbReference>
<dbReference type="Gene3D" id="1.10.12.70">
    <property type="match status" value="1"/>
</dbReference>
<dbReference type="Gene3D" id="3.30.200.20">
    <property type="entry name" value="Phosphorylase Kinase, domain 1"/>
    <property type="match status" value="1"/>
</dbReference>
<dbReference type="Gene3D" id="1.10.510.10">
    <property type="entry name" value="Transferase(Phosphotransferase) domain 1"/>
    <property type="match status" value="1"/>
</dbReference>
<dbReference type="InterPro" id="IPR011009">
    <property type="entry name" value="Kinase-like_dom_sf"/>
</dbReference>
<dbReference type="InterPro" id="IPR046409">
    <property type="entry name" value="PDC10_dimerisation_sf"/>
</dbReference>
<dbReference type="InterPro" id="IPR048288">
    <property type="entry name" value="PDCD10_N"/>
</dbReference>
<dbReference type="InterPro" id="IPR000719">
    <property type="entry name" value="Prot_kinase_dom"/>
</dbReference>
<dbReference type="InterPro" id="IPR017441">
    <property type="entry name" value="Protein_kinase_ATP_BS"/>
</dbReference>
<dbReference type="InterPro" id="IPR050629">
    <property type="entry name" value="STE20/SPS1-PAK"/>
</dbReference>
<dbReference type="InterPro" id="IPR035056">
    <property type="entry name" value="STK_MST4"/>
</dbReference>
<dbReference type="PANTHER" id="PTHR48012:SF7">
    <property type="entry name" value="SERINE_THREONINE-PROTEIN KINASE 26"/>
    <property type="match status" value="1"/>
</dbReference>
<dbReference type="PANTHER" id="PTHR48012">
    <property type="entry name" value="STERILE20-LIKE KINASE, ISOFORM B-RELATED"/>
    <property type="match status" value="1"/>
</dbReference>
<dbReference type="Pfam" id="PF20929">
    <property type="entry name" value="PDCD10_N"/>
    <property type="match status" value="1"/>
</dbReference>
<dbReference type="Pfam" id="PF00069">
    <property type="entry name" value="Pkinase"/>
    <property type="match status" value="1"/>
</dbReference>
<dbReference type="SMART" id="SM00220">
    <property type="entry name" value="S_TKc"/>
    <property type="match status" value="1"/>
</dbReference>
<dbReference type="SUPFAM" id="SSF56112">
    <property type="entry name" value="Protein kinase-like (PK-like)"/>
    <property type="match status" value="1"/>
</dbReference>
<dbReference type="PROSITE" id="PS00107">
    <property type="entry name" value="PROTEIN_KINASE_ATP"/>
    <property type="match status" value="1"/>
</dbReference>
<dbReference type="PROSITE" id="PS50011">
    <property type="entry name" value="PROTEIN_KINASE_DOM"/>
    <property type="match status" value="1"/>
</dbReference>
<proteinExistence type="evidence at protein level"/>
<comment type="function">
    <text evidence="2">Serine/threonine-protein kinase that acts as a mediator of cell growth. Modulates apoptosis. In association with STK24 negatively regulates Golgi reorientation in polarized cell migration upon RHO activation. Phosphorylates ATG4B at 'Ser-383', thereby increasing autophagic flux. Part of the striatin-interacting phosphatase and kinase (STRIPAK) complexes. STRIPAK complexes have critical roles in protein (de)phosphorylation and are regulators of multiple signaling pathways including Hippo, MAPK, nuclear receptor and cytoskeleton remodeling. Different types of STRIPAK complexes are involved in a variety of biological processes such as cell growth, differentiation, apoptosis, metabolism and immune regulation.</text>
</comment>
<comment type="catalytic activity">
    <reaction evidence="2">
        <text>L-seryl-[protein] + ATP = O-phospho-L-seryl-[protein] + ADP + H(+)</text>
        <dbReference type="Rhea" id="RHEA:17989"/>
        <dbReference type="Rhea" id="RHEA-COMP:9863"/>
        <dbReference type="Rhea" id="RHEA-COMP:11604"/>
        <dbReference type="ChEBI" id="CHEBI:15378"/>
        <dbReference type="ChEBI" id="CHEBI:29999"/>
        <dbReference type="ChEBI" id="CHEBI:30616"/>
        <dbReference type="ChEBI" id="CHEBI:83421"/>
        <dbReference type="ChEBI" id="CHEBI:456216"/>
        <dbReference type="EC" id="2.7.11.1"/>
    </reaction>
</comment>
<comment type="catalytic activity">
    <reaction evidence="2">
        <text>L-threonyl-[protein] + ATP = O-phospho-L-threonyl-[protein] + ADP + H(+)</text>
        <dbReference type="Rhea" id="RHEA:46608"/>
        <dbReference type="Rhea" id="RHEA-COMP:11060"/>
        <dbReference type="Rhea" id="RHEA-COMP:11605"/>
        <dbReference type="ChEBI" id="CHEBI:15378"/>
        <dbReference type="ChEBI" id="CHEBI:30013"/>
        <dbReference type="ChEBI" id="CHEBI:30616"/>
        <dbReference type="ChEBI" id="CHEBI:61977"/>
        <dbReference type="ChEBI" id="CHEBI:456216"/>
        <dbReference type="EC" id="2.7.11.1"/>
    </reaction>
</comment>
<comment type="cofactor">
    <cofactor evidence="3">
        <name>Mg(2+)</name>
        <dbReference type="ChEBI" id="CHEBI:18420"/>
    </cofactor>
</comment>
<comment type="activity regulation">
    <text evidence="2">Interaction with Golgi matrix protein GOLGA2 leads to autophosphorylation on Thr-178, possibly as a consequence of stabilization of dimer formation. May also be activated by C-terminal cleavage (By similarity).</text>
</comment>
<comment type="subunit">
    <text evidence="2">Homodimer. Interacts with PDCD10. Interacts with GOLGA2. Interacts with CTTNBP2NL. Interacts with RIPOR1 (via C-terminus); this interaction occurs in a PDCD10-dependent and Rho-independent manner. Interacts with PDCD10; this interaction is required for the association of STK26 with RIPOR1. Part of the core of STRIPAK complexes composed of PP2A catalytic and scaffolding subunits, the striatins (PP2A regulatory subunits), the striatin-associated proteins MOB4, STRIP1 and STRIP2, PDCD10 and members of the STE20 kinases, such as STK24 and STK26.</text>
</comment>
<comment type="subcellular location">
    <subcellularLocation>
        <location evidence="2">Cytoplasm</location>
    </subcellularLocation>
    <subcellularLocation>
        <location evidence="2">Golgi apparatus</location>
    </subcellularLocation>
    <text evidence="2">Colocalized with RIPOR1 in the Golgi of serum-starved cells and relocated to cytoplasmic punctae, probably vesicular compartments, along with RIPOR1 upon serum stimulation in a Rho- and PDCD10-dependent manner.</text>
</comment>
<comment type="similarity">
    <text evidence="6">Belongs to the protein kinase superfamily. STE Ser/Thr protein kinase family. STE20 subfamily.</text>
</comment>
<gene>
    <name evidence="8" type="primary">Stk26</name>
    <name evidence="8" type="synonym">Mst4</name>
</gene>
<reference key="1">
    <citation type="journal article" date="2005" name="Science">
        <title>The transcriptional landscape of the mammalian genome.</title>
        <authorList>
            <person name="Carninci P."/>
            <person name="Kasukawa T."/>
            <person name="Katayama S."/>
            <person name="Gough J."/>
            <person name="Frith M.C."/>
            <person name="Maeda N."/>
            <person name="Oyama R."/>
            <person name="Ravasi T."/>
            <person name="Lenhard B."/>
            <person name="Wells C."/>
            <person name="Kodzius R."/>
            <person name="Shimokawa K."/>
            <person name="Bajic V.B."/>
            <person name="Brenner S.E."/>
            <person name="Batalov S."/>
            <person name="Forrest A.R."/>
            <person name="Zavolan M."/>
            <person name="Davis M.J."/>
            <person name="Wilming L.G."/>
            <person name="Aidinis V."/>
            <person name="Allen J.E."/>
            <person name="Ambesi-Impiombato A."/>
            <person name="Apweiler R."/>
            <person name="Aturaliya R.N."/>
            <person name="Bailey T.L."/>
            <person name="Bansal M."/>
            <person name="Baxter L."/>
            <person name="Beisel K.W."/>
            <person name="Bersano T."/>
            <person name="Bono H."/>
            <person name="Chalk A.M."/>
            <person name="Chiu K.P."/>
            <person name="Choudhary V."/>
            <person name="Christoffels A."/>
            <person name="Clutterbuck D.R."/>
            <person name="Crowe M.L."/>
            <person name="Dalla E."/>
            <person name="Dalrymple B.P."/>
            <person name="de Bono B."/>
            <person name="Della Gatta G."/>
            <person name="di Bernardo D."/>
            <person name="Down T."/>
            <person name="Engstrom P."/>
            <person name="Fagiolini M."/>
            <person name="Faulkner G."/>
            <person name="Fletcher C.F."/>
            <person name="Fukushima T."/>
            <person name="Furuno M."/>
            <person name="Futaki S."/>
            <person name="Gariboldi M."/>
            <person name="Georgii-Hemming P."/>
            <person name="Gingeras T.R."/>
            <person name="Gojobori T."/>
            <person name="Green R.E."/>
            <person name="Gustincich S."/>
            <person name="Harbers M."/>
            <person name="Hayashi Y."/>
            <person name="Hensch T.K."/>
            <person name="Hirokawa N."/>
            <person name="Hill D."/>
            <person name="Huminiecki L."/>
            <person name="Iacono M."/>
            <person name="Ikeo K."/>
            <person name="Iwama A."/>
            <person name="Ishikawa T."/>
            <person name="Jakt M."/>
            <person name="Kanapin A."/>
            <person name="Katoh M."/>
            <person name="Kawasawa Y."/>
            <person name="Kelso J."/>
            <person name="Kitamura H."/>
            <person name="Kitano H."/>
            <person name="Kollias G."/>
            <person name="Krishnan S.P."/>
            <person name="Kruger A."/>
            <person name="Kummerfeld S.K."/>
            <person name="Kurochkin I.V."/>
            <person name="Lareau L.F."/>
            <person name="Lazarevic D."/>
            <person name="Lipovich L."/>
            <person name="Liu J."/>
            <person name="Liuni S."/>
            <person name="McWilliam S."/>
            <person name="Madan Babu M."/>
            <person name="Madera M."/>
            <person name="Marchionni L."/>
            <person name="Matsuda H."/>
            <person name="Matsuzawa S."/>
            <person name="Miki H."/>
            <person name="Mignone F."/>
            <person name="Miyake S."/>
            <person name="Morris K."/>
            <person name="Mottagui-Tabar S."/>
            <person name="Mulder N."/>
            <person name="Nakano N."/>
            <person name="Nakauchi H."/>
            <person name="Ng P."/>
            <person name="Nilsson R."/>
            <person name="Nishiguchi S."/>
            <person name="Nishikawa S."/>
            <person name="Nori F."/>
            <person name="Ohara O."/>
            <person name="Okazaki Y."/>
            <person name="Orlando V."/>
            <person name="Pang K.C."/>
            <person name="Pavan W.J."/>
            <person name="Pavesi G."/>
            <person name="Pesole G."/>
            <person name="Petrovsky N."/>
            <person name="Piazza S."/>
            <person name="Reed J."/>
            <person name="Reid J.F."/>
            <person name="Ring B.Z."/>
            <person name="Ringwald M."/>
            <person name="Rost B."/>
            <person name="Ruan Y."/>
            <person name="Salzberg S.L."/>
            <person name="Sandelin A."/>
            <person name="Schneider C."/>
            <person name="Schoenbach C."/>
            <person name="Sekiguchi K."/>
            <person name="Semple C.A."/>
            <person name="Seno S."/>
            <person name="Sessa L."/>
            <person name="Sheng Y."/>
            <person name="Shibata Y."/>
            <person name="Shimada H."/>
            <person name="Shimada K."/>
            <person name="Silva D."/>
            <person name="Sinclair B."/>
            <person name="Sperling S."/>
            <person name="Stupka E."/>
            <person name="Sugiura K."/>
            <person name="Sultana R."/>
            <person name="Takenaka Y."/>
            <person name="Taki K."/>
            <person name="Tammoja K."/>
            <person name="Tan S.L."/>
            <person name="Tang S."/>
            <person name="Taylor M.S."/>
            <person name="Tegner J."/>
            <person name="Teichmann S.A."/>
            <person name="Ueda H.R."/>
            <person name="van Nimwegen E."/>
            <person name="Verardo R."/>
            <person name="Wei C.L."/>
            <person name="Yagi K."/>
            <person name="Yamanishi H."/>
            <person name="Zabarovsky E."/>
            <person name="Zhu S."/>
            <person name="Zimmer A."/>
            <person name="Hide W."/>
            <person name="Bult C."/>
            <person name="Grimmond S.M."/>
            <person name="Teasdale R.D."/>
            <person name="Liu E.T."/>
            <person name="Brusic V."/>
            <person name="Quackenbush J."/>
            <person name="Wahlestedt C."/>
            <person name="Mattick J.S."/>
            <person name="Hume D.A."/>
            <person name="Kai C."/>
            <person name="Sasaki D."/>
            <person name="Tomaru Y."/>
            <person name="Fukuda S."/>
            <person name="Kanamori-Katayama M."/>
            <person name="Suzuki M."/>
            <person name="Aoki J."/>
            <person name="Arakawa T."/>
            <person name="Iida J."/>
            <person name="Imamura K."/>
            <person name="Itoh M."/>
            <person name="Kato T."/>
            <person name="Kawaji H."/>
            <person name="Kawagashira N."/>
            <person name="Kawashima T."/>
            <person name="Kojima M."/>
            <person name="Kondo S."/>
            <person name="Konno H."/>
            <person name="Nakano K."/>
            <person name="Ninomiya N."/>
            <person name="Nishio T."/>
            <person name="Okada M."/>
            <person name="Plessy C."/>
            <person name="Shibata K."/>
            <person name="Shiraki T."/>
            <person name="Suzuki S."/>
            <person name="Tagami M."/>
            <person name="Waki K."/>
            <person name="Watahiki A."/>
            <person name="Okamura-Oho Y."/>
            <person name="Suzuki H."/>
            <person name="Kawai J."/>
            <person name="Hayashizaki Y."/>
        </authorList>
    </citation>
    <scope>NUCLEOTIDE SEQUENCE [LARGE SCALE MRNA]</scope>
    <source>
        <strain>C57BL/6J</strain>
        <tissue>Embryo</tissue>
    </source>
</reference>
<reference evidence="7" key="2">
    <citation type="journal article" date="2004" name="Genome Res.">
        <title>The status, quality, and expansion of the NIH full-length cDNA project: the Mammalian Gene Collection (MGC).</title>
        <authorList>
            <consortium name="The MGC Project Team"/>
        </authorList>
    </citation>
    <scope>NUCLEOTIDE SEQUENCE [LARGE SCALE MRNA]</scope>
    <source>
        <strain evidence="7">FVB/N</strain>
        <tissue evidence="7">Mammary gland</tissue>
    </source>
</reference>
<reference key="3">
    <citation type="journal article" date="2010" name="Cell">
        <title>A tissue-specific atlas of mouse protein phosphorylation and expression.</title>
        <authorList>
            <person name="Huttlin E.L."/>
            <person name="Jedrychowski M.P."/>
            <person name="Elias J.E."/>
            <person name="Goswami T."/>
            <person name="Rad R."/>
            <person name="Beausoleil S.A."/>
            <person name="Villen J."/>
            <person name="Haas W."/>
            <person name="Sowa M.E."/>
            <person name="Gygi S.P."/>
        </authorList>
    </citation>
    <scope>PHOSPHORYLATION [LARGE SCALE ANALYSIS] AT SER-300 AND SER-309</scope>
    <scope>IDENTIFICATION BY MASS SPECTROMETRY [LARGE SCALE ANALYSIS]</scope>
    <source>
        <tissue>Lung</tissue>
        <tissue>Spleen</tissue>
        <tissue>Testis</tissue>
    </source>
</reference>
<evidence type="ECO:0000250" key="1">
    <source>
        <dbReference type="UniProtKB" id="Q99KH8"/>
    </source>
</evidence>
<evidence type="ECO:0000250" key="2">
    <source>
        <dbReference type="UniProtKB" id="Q9P289"/>
    </source>
</evidence>
<evidence type="ECO:0000250" key="3">
    <source>
        <dbReference type="UniProtKB" id="Q9Y4P1"/>
    </source>
</evidence>
<evidence type="ECO:0000255" key="4">
    <source>
        <dbReference type="PROSITE-ProRule" id="PRU00159"/>
    </source>
</evidence>
<evidence type="ECO:0000256" key="5">
    <source>
        <dbReference type="SAM" id="MobiDB-lite"/>
    </source>
</evidence>
<evidence type="ECO:0000305" key="6"/>
<evidence type="ECO:0000312" key="7">
    <source>
        <dbReference type="EMBL" id="AAH05708.1"/>
    </source>
</evidence>
<evidence type="ECO:0000312" key="8">
    <source>
        <dbReference type="MGI" id="MGI:1917665"/>
    </source>
</evidence>
<evidence type="ECO:0007744" key="9">
    <source>
    </source>
</evidence>
<protein>
    <recommendedName>
        <fullName evidence="6">Serine/threonine-protein kinase 26</fullName>
        <ecNumber evidence="2">2.7.11.1</ecNumber>
    </recommendedName>
    <alternativeName>
        <fullName evidence="6">Mammalian STE20-like protein kinase 4</fullName>
        <shortName evidence="6">MST-4</shortName>
    </alternativeName>
    <alternativeName>
        <fullName evidence="6">STE20-like kinase MST4</fullName>
    </alternativeName>
    <alternativeName>
        <fullName evidence="6">Serine/threonine-protein kinase MST4</fullName>
    </alternativeName>
</protein>
<feature type="initiator methionine" description="Removed" evidence="2">
    <location>
        <position position="1"/>
    </location>
</feature>
<feature type="chain" id="PRO_0000086405" description="Serine/threonine-protein kinase 26">
    <location>
        <begin position="2"/>
        <end position="416"/>
    </location>
</feature>
<feature type="domain" description="Protein kinase" evidence="4">
    <location>
        <begin position="24"/>
        <end position="274"/>
    </location>
</feature>
<feature type="region of interest" description="Disordered" evidence="5">
    <location>
        <begin position="296"/>
        <end position="343"/>
    </location>
</feature>
<feature type="compositionally biased region" description="Basic and acidic residues" evidence="5">
    <location>
        <begin position="331"/>
        <end position="340"/>
    </location>
</feature>
<feature type="active site" description="Proton acceptor" evidence="1 4">
    <location>
        <position position="144"/>
    </location>
</feature>
<feature type="binding site" evidence="1 4">
    <location>
        <begin position="30"/>
        <end position="38"/>
    </location>
    <ligand>
        <name>ATP</name>
        <dbReference type="ChEBI" id="CHEBI:30616"/>
    </ligand>
</feature>
<feature type="binding site" evidence="2 4">
    <location>
        <position position="53"/>
    </location>
    <ligand>
        <name>ATP</name>
        <dbReference type="ChEBI" id="CHEBI:30616"/>
    </ligand>
</feature>
<feature type="modified residue" description="N-acetylalanine" evidence="2">
    <location>
        <position position="2"/>
    </location>
</feature>
<feature type="modified residue" description="Phosphoserine" evidence="2">
    <location>
        <position position="4"/>
    </location>
</feature>
<feature type="modified residue" description="Phosphothreonine; by autocatalysis" evidence="2">
    <location>
        <position position="178"/>
    </location>
</feature>
<feature type="modified residue" description="Phosphoserine" evidence="9">
    <location>
        <position position="300"/>
    </location>
</feature>
<feature type="modified residue" description="Phosphoserine" evidence="2">
    <location>
        <position position="304"/>
    </location>
</feature>
<feature type="modified residue" description="Phosphoserine" evidence="2">
    <location>
        <position position="306"/>
    </location>
</feature>
<feature type="modified residue" description="Phosphoserine" evidence="9">
    <location>
        <position position="309"/>
    </location>
</feature>
<feature type="modified residue" description="Phosphoserine" evidence="2">
    <location>
        <position position="325"/>
    </location>
</feature>
<feature type="modified residue" description="Phosphothreonine" evidence="2">
    <location>
        <position position="327"/>
    </location>
</feature>
<feature type="modified residue" description="Phosphothreonine" evidence="2">
    <location>
        <position position="328"/>
    </location>
</feature>
<accession>Q99JT2</accession>
<keyword id="KW-0007">Acetylation</keyword>
<keyword id="KW-0053">Apoptosis</keyword>
<keyword id="KW-0067">ATP-binding</keyword>
<keyword id="KW-0963">Cytoplasm</keyword>
<keyword id="KW-0333">Golgi apparatus</keyword>
<keyword id="KW-0418">Kinase</keyword>
<keyword id="KW-0460">Magnesium</keyword>
<keyword id="KW-0479">Metal-binding</keyword>
<keyword id="KW-0547">Nucleotide-binding</keyword>
<keyword id="KW-0597">Phosphoprotein</keyword>
<keyword id="KW-1185">Reference proteome</keyword>
<keyword id="KW-0723">Serine/threonine-protein kinase</keyword>
<keyword id="KW-0808">Transferase</keyword>